<gene>
    <name type="primary">AMSH3</name>
    <name type="ordered locus">At4g16144</name>
    <name type="ORF">FCAALL</name>
</gene>
<comment type="function">
    <text evidence="5">Zinc metalloprotease that cleaves 'Lys-48'- and 'Lys-63'-linked polyubiquitin chains, but is not implicated in protein degradation by the 26S proteasome, deneddylation, or desumoylation. Required for intracellular trafficking (e.g. trafficking from the Golgi to the vacuole and the vacuolar trafficking of endocytosed cargo), endocytosis and vacuole biogenesis.</text>
</comment>
<comment type="cofactor">
    <cofactor evidence="1">
        <name>Zn(2+)</name>
        <dbReference type="ChEBI" id="CHEBI:29105"/>
    </cofactor>
    <text evidence="1">Binds 2 Zn(2+) ions per subunit.</text>
</comment>
<comment type="subunit">
    <text evidence="5 6">Interacts with PATL1 and PATL2. May also bind to HSC70-1, HSC70-3, VHA-A, BGLU23 and EPSIN1. Interacts with BRO1/ALIX (PubMed:26324913).</text>
</comment>
<comment type="subcellular location">
    <subcellularLocation>
        <location evidence="5">Membrane</location>
        <topology evidence="5">Peripheral membrane protein</topology>
    </subcellularLocation>
    <subcellularLocation>
        <location evidence="6 8">Cytoplasm</location>
    </subcellularLocation>
    <subcellularLocation>
        <location evidence="8">Vacuole membrane</location>
        <topology evidence="8">Peripheral membrane protein</topology>
    </subcellularLocation>
    <subcellularLocation>
        <location evidence="6">Late endosome</location>
    </subcellularLocation>
    <text evidence="6">Localized in late endosome when associated with BRO1/ALIX.</text>
</comment>
<comment type="domain">
    <text>The JAMM motif is essential for the protease activity.</text>
</comment>
<comment type="disruption phenotype">
    <text evidence="5">Seedling growth arrest phenotype. Impaired central lytic vacuole formation, autophagosomes accumulation, and mis-sorting of vacuolar protein cargo to the intercellular space as well as disturbed endocytosis.</text>
</comment>
<comment type="similarity">
    <text evidence="7">Belongs to the peptidase M67C family.</text>
</comment>
<comment type="sequence caution" evidence="7">
    <conflict type="frameshift">
        <sequence resource="EMBL" id="AL161543"/>
    </conflict>
</comment>
<comment type="sequence caution" evidence="7">
    <conflict type="frameshift">
        <sequence resource="EMBL" id="Z97340"/>
    </conflict>
</comment>
<dbReference type="EC" id="3.4.19.-"/>
<dbReference type="EMBL" id="Z97340">
    <property type="status" value="NOT_ANNOTATED_CDS"/>
    <property type="molecule type" value="Genomic_DNA"/>
</dbReference>
<dbReference type="EMBL" id="AL161543">
    <property type="status" value="NOT_ANNOTATED_CDS"/>
    <property type="molecule type" value="Genomic_DNA"/>
</dbReference>
<dbReference type="EMBL" id="CP002687">
    <property type="status" value="NOT_ANNOTATED_CDS"/>
    <property type="molecule type" value="Genomic_DNA"/>
</dbReference>
<dbReference type="EMBL" id="BT020354">
    <property type="protein sequence ID" value="AAV85709.1"/>
    <property type="molecule type" value="mRNA"/>
</dbReference>
<dbReference type="SMR" id="Q5PNU3"/>
<dbReference type="BioGRID" id="12597">
    <property type="interactions" value="4"/>
</dbReference>
<dbReference type="FunCoup" id="Q5PNU3">
    <property type="interactions" value="2048"/>
</dbReference>
<dbReference type="STRING" id="3702.Q5PNU3"/>
<dbReference type="MEROPS" id="M67.A06"/>
<dbReference type="PaxDb" id="3702-AT4G16144.1"/>
<dbReference type="ProteomicsDB" id="245040"/>
<dbReference type="Araport" id="AT4G16144"/>
<dbReference type="TAIR" id="AT4G16144">
    <property type="gene designation" value="AMSH3"/>
</dbReference>
<dbReference type="eggNOG" id="KOG2880">
    <property type="taxonomic scope" value="Eukaryota"/>
</dbReference>
<dbReference type="HOGENOM" id="CLU_023304_5_1_1"/>
<dbReference type="InParanoid" id="Q5PNU3"/>
<dbReference type="PhylomeDB" id="Q5PNU3"/>
<dbReference type="PRO" id="PR:Q5PNU3"/>
<dbReference type="Proteomes" id="UP000006548">
    <property type="component" value="Chromosome 4"/>
</dbReference>
<dbReference type="ExpressionAtlas" id="Q5PNU3">
    <property type="expression patterns" value="baseline and differential"/>
</dbReference>
<dbReference type="GO" id="GO:0005737">
    <property type="term" value="C:cytoplasm"/>
    <property type="evidence" value="ECO:0000314"/>
    <property type="project" value="UniProtKB"/>
</dbReference>
<dbReference type="GO" id="GO:0005768">
    <property type="term" value="C:endosome"/>
    <property type="evidence" value="ECO:0000318"/>
    <property type="project" value="GO_Central"/>
</dbReference>
<dbReference type="GO" id="GO:0005770">
    <property type="term" value="C:late endosome"/>
    <property type="evidence" value="ECO:0000314"/>
    <property type="project" value="UniProtKB"/>
</dbReference>
<dbReference type="GO" id="GO:0005774">
    <property type="term" value="C:vacuolar membrane"/>
    <property type="evidence" value="ECO:0007669"/>
    <property type="project" value="UniProtKB-SubCell"/>
</dbReference>
<dbReference type="GO" id="GO:0101005">
    <property type="term" value="F:deubiquitinase activity"/>
    <property type="evidence" value="ECO:0000318"/>
    <property type="project" value="GO_Central"/>
</dbReference>
<dbReference type="GO" id="GO:0061578">
    <property type="term" value="F:K63-linked deubiquitinase activity"/>
    <property type="evidence" value="ECO:0007669"/>
    <property type="project" value="InterPro"/>
</dbReference>
<dbReference type="GO" id="GO:0046872">
    <property type="term" value="F:metal ion binding"/>
    <property type="evidence" value="ECO:0007669"/>
    <property type="project" value="UniProtKB-KW"/>
</dbReference>
<dbReference type="GO" id="GO:0140492">
    <property type="term" value="F:metal-dependent deubiquitinase activity"/>
    <property type="evidence" value="ECO:0007669"/>
    <property type="project" value="InterPro"/>
</dbReference>
<dbReference type="GO" id="GO:0006897">
    <property type="term" value="P:endocytosis"/>
    <property type="evidence" value="ECO:0000315"/>
    <property type="project" value="TAIR"/>
</dbReference>
<dbReference type="GO" id="GO:0046907">
    <property type="term" value="P:intracellular transport"/>
    <property type="evidence" value="ECO:0000315"/>
    <property type="project" value="TAIR"/>
</dbReference>
<dbReference type="GO" id="GO:0032511">
    <property type="term" value="P:late endosome to vacuole transport via multivesicular body sorting pathway"/>
    <property type="evidence" value="ECO:0000318"/>
    <property type="project" value="GO_Central"/>
</dbReference>
<dbReference type="GO" id="GO:0090316">
    <property type="term" value="P:positive regulation of intracellular protein transport"/>
    <property type="evidence" value="ECO:0000315"/>
    <property type="project" value="UniProtKB"/>
</dbReference>
<dbReference type="GO" id="GO:0044090">
    <property type="term" value="P:positive regulation of vacuole organization"/>
    <property type="evidence" value="ECO:0000315"/>
    <property type="project" value="UniProtKB"/>
</dbReference>
<dbReference type="GO" id="GO:0071108">
    <property type="term" value="P:protein K48-linked deubiquitination"/>
    <property type="evidence" value="ECO:0000314"/>
    <property type="project" value="UniProtKB"/>
</dbReference>
<dbReference type="GO" id="GO:0070536">
    <property type="term" value="P:protein K63-linked deubiquitination"/>
    <property type="evidence" value="ECO:0000314"/>
    <property type="project" value="UniProtKB"/>
</dbReference>
<dbReference type="GO" id="GO:0015031">
    <property type="term" value="P:protein transport"/>
    <property type="evidence" value="ECO:0007669"/>
    <property type="project" value="UniProtKB-KW"/>
</dbReference>
<dbReference type="GO" id="GO:0006508">
    <property type="term" value="P:proteolysis"/>
    <property type="evidence" value="ECO:0007669"/>
    <property type="project" value="UniProtKB-KW"/>
</dbReference>
<dbReference type="GO" id="GO:0007033">
    <property type="term" value="P:vacuole organization"/>
    <property type="evidence" value="ECO:0000315"/>
    <property type="project" value="TAIR"/>
</dbReference>
<dbReference type="CDD" id="cd08066">
    <property type="entry name" value="MPN_AMSH_like"/>
    <property type="match status" value="1"/>
</dbReference>
<dbReference type="FunFam" id="1.20.58.80:FF:000020">
    <property type="entry name" value="AMSH-like ubiquitin thioesterase 3"/>
    <property type="match status" value="1"/>
</dbReference>
<dbReference type="FunFam" id="3.40.140.10:FF:000024">
    <property type="entry name" value="AMSH-like ubiquitin thioesterase 3"/>
    <property type="match status" value="1"/>
</dbReference>
<dbReference type="Gene3D" id="3.40.140.10">
    <property type="entry name" value="Cytidine Deaminase, domain 2"/>
    <property type="match status" value="1"/>
</dbReference>
<dbReference type="Gene3D" id="1.20.58.80">
    <property type="entry name" value="Phosphotransferase system, lactose/cellobiose-type IIA subunit"/>
    <property type="match status" value="1"/>
</dbReference>
<dbReference type="InterPro" id="IPR000555">
    <property type="entry name" value="JAMM/MPN+_dom"/>
</dbReference>
<dbReference type="InterPro" id="IPR037518">
    <property type="entry name" value="MPN"/>
</dbReference>
<dbReference type="InterPro" id="IPR044098">
    <property type="entry name" value="STAMBP/STALP-like_MPN"/>
</dbReference>
<dbReference type="InterPro" id="IPR015063">
    <property type="entry name" value="USP8_dimer"/>
</dbReference>
<dbReference type="PANTHER" id="PTHR12947">
    <property type="entry name" value="AMSH-LIKE PROTEASE"/>
    <property type="match status" value="1"/>
</dbReference>
<dbReference type="PANTHER" id="PTHR12947:SF18">
    <property type="entry name" value="AMSH-LIKE UBIQUITIN THIOESTERASE 3"/>
    <property type="match status" value="1"/>
</dbReference>
<dbReference type="Pfam" id="PF01398">
    <property type="entry name" value="JAB"/>
    <property type="match status" value="1"/>
</dbReference>
<dbReference type="Pfam" id="PF08969">
    <property type="entry name" value="USP8_dimer"/>
    <property type="match status" value="1"/>
</dbReference>
<dbReference type="SMART" id="SM00232">
    <property type="entry name" value="JAB_MPN"/>
    <property type="match status" value="1"/>
</dbReference>
<dbReference type="SUPFAM" id="SSF102712">
    <property type="entry name" value="JAB1/MPN domain"/>
    <property type="match status" value="1"/>
</dbReference>
<dbReference type="PROSITE" id="PS50249">
    <property type="entry name" value="MPN"/>
    <property type="match status" value="1"/>
</dbReference>
<proteinExistence type="evidence at protein level"/>
<organism>
    <name type="scientific">Arabidopsis thaliana</name>
    <name type="common">Mouse-ear cress</name>
    <dbReference type="NCBI Taxonomy" id="3702"/>
    <lineage>
        <taxon>Eukaryota</taxon>
        <taxon>Viridiplantae</taxon>
        <taxon>Streptophyta</taxon>
        <taxon>Embryophyta</taxon>
        <taxon>Tracheophyta</taxon>
        <taxon>Spermatophyta</taxon>
        <taxon>Magnoliopsida</taxon>
        <taxon>eudicotyledons</taxon>
        <taxon>Gunneridae</taxon>
        <taxon>Pentapetalae</taxon>
        <taxon>rosids</taxon>
        <taxon>malvids</taxon>
        <taxon>Brassicales</taxon>
        <taxon>Brassicaceae</taxon>
        <taxon>Camelineae</taxon>
        <taxon>Arabidopsis</taxon>
    </lineage>
</organism>
<accession>Q5PNU3</accession>
<feature type="chain" id="PRO_0000397100" description="AMSH-like ubiquitin thioesterase 3">
    <location>
        <begin position="1"/>
        <end position="507"/>
    </location>
</feature>
<feature type="domain" description="MPN" evidence="3">
    <location>
        <begin position="333"/>
        <end position="463"/>
    </location>
</feature>
<feature type="region of interest" description="Disordered" evidence="4">
    <location>
        <begin position="133"/>
        <end position="162"/>
    </location>
</feature>
<feature type="region of interest" description="Disordered" evidence="4">
    <location>
        <begin position="214"/>
        <end position="242"/>
    </location>
</feature>
<feature type="coiled-coil region" evidence="2">
    <location>
        <begin position="73"/>
        <end position="107"/>
    </location>
</feature>
<feature type="short sequence motif" description="JAMM motif" evidence="3">
    <location>
        <begin position="411"/>
        <end position="424"/>
    </location>
</feature>
<feature type="compositionally biased region" description="Polar residues" evidence="4">
    <location>
        <begin position="146"/>
        <end position="162"/>
    </location>
</feature>
<feature type="compositionally biased region" description="Polar residues" evidence="4">
    <location>
        <begin position="214"/>
        <end position="224"/>
    </location>
</feature>
<feature type="compositionally biased region" description="Polar residues" evidence="4">
    <location>
        <begin position="232"/>
        <end position="242"/>
    </location>
</feature>
<feature type="binding site" evidence="3">
    <location>
        <position position="411"/>
    </location>
    <ligand>
        <name>Zn(2+)</name>
        <dbReference type="ChEBI" id="CHEBI:29105"/>
        <label>1</label>
        <note>catalytic</note>
    </ligand>
</feature>
<feature type="binding site" evidence="3">
    <location>
        <position position="413"/>
    </location>
    <ligand>
        <name>Zn(2+)</name>
        <dbReference type="ChEBI" id="CHEBI:29105"/>
        <label>1</label>
        <note>catalytic</note>
    </ligand>
</feature>
<feature type="binding site" evidence="3">
    <location>
        <position position="424"/>
    </location>
    <ligand>
        <name>Zn(2+)</name>
        <dbReference type="ChEBI" id="CHEBI:29105"/>
        <label>1</label>
        <note>catalytic</note>
    </ligand>
</feature>
<feature type="binding site" evidence="1">
    <location>
        <position position="426"/>
    </location>
    <ligand>
        <name>Zn(2+)</name>
        <dbReference type="ChEBI" id="CHEBI:29105"/>
        <label>2</label>
    </ligand>
</feature>
<feature type="binding site" evidence="1">
    <location>
        <position position="469"/>
    </location>
    <ligand>
        <name>Zn(2+)</name>
        <dbReference type="ChEBI" id="CHEBI:29105"/>
        <label>2</label>
    </ligand>
</feature>
<feature type="binding site" evidence="1">
    <location>
        <position position="475"/>
    </location>
    <ligand>
        <name>Zn(2+)</name>
        <dbReference type="ChEBI" id="CHEBI:29105"/>
        <label>2</label>
    </ligand>
</feature>
<feature type="binding site" evidence="1">
    <location>
        <position position="477"/>
    </location>
    <ligand>
        <name>Zn(2+)</name>
        <dbReference type="ChEBI" id="CHEBI:29105"/>
        <label>2</label>
    </ligand>
</feature>
<feature type="site" description="Indirect zinc-binding" evidence="1">
    <location>
        <position position="356"/>
    </location>
</feature>
<feature type="mutagenesis site" description="In amsh3-axa; loss of ubiquitin thioesterase activity and seedling growth arrest." evidence="5">
    <original>HTH</original>
    <variation>ATA</variation>
    <location>
        <begin position="411"/>
        <end position="413"/>
    </location>
</feature>
<feature type="sequence conflict" description="In Ref. 4; AAV85709." evidence="7" ref="4">
    <original>K</original>
    <variation>E</variation>
    <location>
        <position position="80"/>
    </location>
</feature>
<feature type="sequence conflict" description="In Ref. 4; AAV85709." evidence="7" ref="4">
    <original>M</original>
    <variation>W</variation>
    <location>
        <position position="202"/>
    </location>
</feature>
<protein>
    <recommendedName>
        <fullName>AMSH-like ubiquitin thioesterase 3</fullName>
        <ecNumber>3.4.19.-</ecNumber>
    </recommendedName>
    <alternativeName>
        <fullName>Deubiquitinating enzyme AMSH3</fullName>
    </alternativeName>
</protein>
<sequence length="507" mass="57268">MKIDLNKVAREIEVDNRIPLRNYYRIADNLLRQASIYREEKNVVDLYIMLLRYSSLISETIPFHRDYQASLPQERLGSRKRLRAVINELESLKPEFNQLVDKLNRVEDESRQDGSDLPVVSYSSDAVEWPPAHKASYSRPDINKPLPTSQPSWTYNNNLTSSSNRTQIDQQFQKLSFDFLPPNQATLSRHSFLGPNGLKRQMVAPKSEIKVQYPSNTDWGSADNSGLIEAGPSSSSASLNGDSQEVSTLNSVLSLDDGRWQRHSEAVNSQFISDATEDPFQFVGMKQPSPPPVLAQVHQELAQICPSKVADPRPGPAIPSLEGKEGSNSYQHLHVPVRIMDDFLRLARSNTERNLETCGVLAGSLKNRVFHITTLIIPKQESTSDSCQTLNEEEIFEVQDRLSLFPLGWIHTHPTQTCFMSSVDLHTHYSYQIMLPEAVAIVMAPTDESTPHGIFHLSDPSGVSVIRNCQQRGFHPHEESEDGNPIYEHCSHVFLNAKLKYEVLDLR</sequence>
<keyword id="KW-0175">Coiled coil</keyword>
<keyword id="KW-0963">Cytoplasm</keyword>
<keyword id="KW-0254">Endocytosis</keyword>
<keyword id="KW-0967">Endosome</keyword>
<keyword id="KW-0378">Hydrolase</keyword>
<keyword id="KW-0472">Membrane</keyword>
<keyword id="KW-0479">Metal-binding</keyword>
<keyword id="KW-0482">Metalloprotease</keyword>
<keyword id="KW-0645">Protease</keyword>
<keyword id="KW-0653">Protein transport</keyword>
<keyword id="KW-1185">Reference proteome</keyword>
<keyword id="KW-0813">Transport</keyword>
<keyword id="KW-0833">Ubl conjugation pathway</keyword>
<keyword id="KW-0926">Vacuole</keyword>
<keyword id="KW-0862">Zinc</keyword>
<evidence type="ECO:0000250" key="1"/>
<evidence type="ECO:0000255" key="2"/>
<evidence type="ECO:0000255" key="3">
    <source>
        <dbReference type="PROSITE-ProRule" id="PRU01182"/>
    </source>
</evidence>
<evidence type="ECO:0000256" key="4">
    <source>
        <dbReference type="SAM" id="MobiDB-lite"/>
    </source>
</evidence>
<evidence type="ECO:0000269" key="5">
    <source>
    </source>
</evidence>
<evidence type="ECO:0000269" key="6">
    <source>
    </source>
</evidence>
<evidence type="ECO:0000305" key="7"/>
<evidence type="ECO:0000305" key="8">
    <source>
    </source>
</evidence>
<name>AMSH3_ARATH</name>
<reference key="1">
    <citation type="journal article" date="1998" name="Nature">
        <title>Analysis of 1.9 Mb of contiguous sequence from chromosome 4 of Arabidopsis thaliana.</title>
        <authorList>
            <person name="Bevan M."/>
            <person name="Bancroft I."/>
            <person name="Bent E."/>
            <person name="Love K."/>
            <person name="Goodman H.M."/>
            <person name="Dean C."/>
            <person name="Bergkamp R."/>
            <person name="Dirkse W."/>
            <person name="van Staveren M."/>
            <person name="Stiekema W."/>
            <person name="Drost L."/>
            <person name="Ridley P."/>
            <person name="Hudson S.-A."/>
            <person name="Patel K."/>
            <person name="Murphy G."/>
            <person name="Piffanelli P."/>
            <person name="Wedler H."/>
            <person name="Wedler E."/>
            <person name="Wambutt R."/>
            <person name="Weitzenegger T."/>
            <person name="Pohl T."/>
            <person name="Terryn N."/>
            <person name="Gielen J."/>
            <person name="Villarroel R."/>
            <person name="De Clercq R."/>
            <person name="van Montagu M."/>
            <person name="Lecharny A."/>
            <person name="Aubourg S."/>
            <person name="Gy I."/>
            <person name="Kreis M."/>
            <person name="Lao N."/>
            <person name="Kavanagh T."/>
            <person name="Hempel S."/>
            <person name="Kotter P."/>
            <person name="Entian K.-D."/>
            <person name="Rieger M."/>
            <person name="Schaefer M."/>
            <person name="Funk B."/>
            <person name="Mueller-Auer S."/>
            <person name="Silvey M."/>
            <person name="James R."/>
            <person name="Monfort A."/>
            <person name="Pons A."/>
            <person name="Puigdomenech P."/>
            <person name="Douka A."/>
            <person name="Voukelatou E."/>
            <person name="Milioni D."/>
            <person name="Hatzopoulos P."/>
            <person name="Piravandi E."/>
            <person name="Obermaier B."/>
            <person name="Hilbert H."/>
            <person name="Duesterhoeft A."/>
            <person name="Moores T."/>
            <person name="Jones J.D.G."/>
            <person name="Eneva T."/>
            <person name="Palme K."/>
            <person name="Benes V."/>
            <person name="Rechmann S."/>
            <person name="Ansorge W."/>
            <person name="Cooke R."/>
            <person name="Berger C."/>
            <person name="Delseny M."/>
            <person name="Voet M."/>
            <person name="Volckaert G."/>
            <person name="Mewes H.-W."/>
            <person name="Klosterman S."/>
            <person name="Schueller C."/>
            <person name="Chalwatzis N."/>
        </authorList>
    </citation>
    <scope>NUCLEOTIDE SEQUENCE [LARGE SCALE GENOMIC DNA]</scope>
    <source>
        <strain>cv. Columbia</strain>
    </source>
</reference>
<reference key="2">
    <citation type="journal article" date="1999" name="Nature">
        <title>Sequence and analysis of chromosome 4 of the plant Arabidopsis thaliana.</title>
        <authorList>
            <person name="Mayer K.F.X."/>
            <person name="Schueller C."/>
            <person name="Wambutt R."/>
            <person name="Murphy G."/>
            <person name="Volckaert G."/>
            <person name="Pohl T."/>
            <person name="Duesterhoeft A."/>
            <person name="Stiekema W."/>
            <person name="Entian K.-D."/>
            <person name="Terryn N."/>
            <person name="Harris B."/>
            <person name="Ansorge W."/>
            <person name="Brandt P."/>
            <person name="Grivell L.A."/>
            <person name="Rieger M."/>
            <person name="Weichselgartner M."/>
            <person name="de Simone V."/>
            <person name="Obermaier B."/>
            <person name="Mache R."/>
            <person name="Mueller M."/>
            <person name="Kreis M."/>
            <person name="Delseny M."/>
            <person name="Puigdomenech P."/>
            <person name="Watson M."/>
            <person name="Schmidtheini T."/>
            <person name="Reichert B."/>
            <person name="Portetelle D."/>
            <person name="Perez-Alonso M."/>
            <person name="Boutry M."/>
            <person name="Bancroft I."/>
            <person name="Vos P."/>
            <person name="Hoheisel J."/>
            <person name="Zimmermann W."/>
            <person name="Wedler H."/>
            <person name="Ridley P."/>
            <person name="Langham S.-A."/>
            <person name="McCullagh B."/>
            <person name="Bilham L."/>
            <person name="Robben J."/>
            <person name="van der Schueren J."/>
            <person name="Grymonprez B."/>
            <person name="Chuang Y.-J."/>
            <person name="Vandenbussche F."/>
            <person name="Braeken M."/>
            <person name="Weltjens I."/>
            <person name="Voet M."/>
            <person name="Bastiaens I."/>
            <person name="Aert R."/>
            <person name="Defoor E."/>
            <person name="Weitzenegger T."/>
            <person name="Bothe G."/>
            <person name="Ramsperger U."/>
            <person name="Hilbert H."/>
            <person name="Braun M."/>
            <person name="Holzer E."/>
            <person name="Brandt A."/>
            <person name="Peters S."/>
            <person name="van Staveren M."/>
            <person name="Dirkse W."/>
            <person name="Mooijman P."/>
            <person name="Klein Lankhorst R."/>
            <person name="Rose M."/>
            <person name="Hauf J."/>
            <person name="Koetter P."/>
            <person name="Berneiser S."/>
            <person name="Hempel S."/>
            <person name="Feldpausch M."/>
            <person name="Lamberth S."/>
            <person name="Van den Daele H."/>
            <person name="De Keyser A."/>
            <person name="Buysshaert C."/>
            <person name="Gielen J."/>
            <person name="Villarroel R."/>
            <person name="De Clercq R."/>
            <person name="van Montagu M."/>
            <person name="Rogers J."/>
            <person name="Cronin A."/>
            <person name="Quail M.A."/>
            <person name="Bray-Allen S."/>
            <person name="Clark L."/>
            <person name="Doggett J."/>
            <person name="Hall S."/>
            <person name="Kay M."/>
            <person name="Lennard N."/>
            <person name="McLay K."/>
            <person name="Mayes R."/>
            <person name="Pettett A."/>
            <person name="Rajandream M.A."/>
            <person name="Lyne M."/>
            <person name="Benes V."/>
            <person name="Rechmann S."/>
            <person name="Borkova D."/>
            <person name="Bloecker H."/>
            <person name="Scharfe M."/>
            <person name="Grimm M."/>
            <person name="Loehnert T.-H."/>
            <person name="Dose S."/>
            <person name="de Haan M."/>
            <person name="Maarse A.C."/>
            <person name="Schaefer M."/>
            <person name="Mueller-Auer S."/>
            <person name="Gabel C."/>
            <person name="Fuchs M."/>
            <person name="Fartmann B."/>
            <person name="Granderath K."/>
            <person name="Dauner D."/>
            <person name="Herzl A."/>
            <person name="Neumann S."/>
            <person name="Argiriou A."/>
            <person name="Vitale D."/>
            <person name="Liguori R."/>
            <person name="Piravandi E."/>
            <person name="Massenet O."/>
            <person name="Quigley F."/>
            <person name="Clabauld G."/>
            <person name="Muendlein A."/>
            <person name="Felber R."/>
            <person name="Schnabl S."/>
            <person name="Hiller R."/>
            <person name="Schmidt W."/>
            <person name="Lecharny A."/>
            <person name="Aubourg S."/>
            <person name="Chefdor F."/>
            <person name="Cooke R."/>
            <person name="Berger C."/>
            <person name="Monfort A."/>
            <person name="Casacuberta E."/>
            <person name="Gibbons T."/>
            <person name="Weber N."/>
            <person name="Vandenbol M."/>
            <person name="Bargues M."/>
            <person name="Terol J."/>
            <person name="Torres A."/>
            <person name="Perez-Perez A."/>
            <person name="Purnelle B."/>
            <person name="Bent E."/>
            <person name="Johnson S."/>
            <person name="Tacon D."/>
            <person name="Jesse T."/>
            <person name="Heijnen L."/>
            <person name="Schwarz S."/>
            <person name="Scholler P."/>
            <person name="Heber S."/>
            <person name="Francs P."/>
            <person name="Bielke C."/>
            <person name="Frishman D."/>
            <person name="Haase D."/>
            <person name="Lemcke K."/>
            <person name="Mewes H.-W."/>
            <person name="Stocker S."/>
            <person name="Zaccaria P."/>
            <person name="Bevan M."/>
            <person name="Wilson R.K."/>
            <person name="de la Bastide M."/>
            <person name="Habermann K."/>
            <person name="Parnell L."/>
            <person name="Dedhia N."/>
            <person name="Gnoj L."/>
            <person name="Schutz K."/>
            <person name="Huang E."/>
            <person name="Spiegel L."/>
            <person name="Sekhon M."/>
            <person name="Murray J."/>
            <person name="Sheet P."/>
            <person name="Cordes M."/>
            <person name="Abu-Threideh J."/>
            <person name="Stoneking T."/>
            <person name="Kalicki J."/>
            <person name="Graves T."/>
            <person name="Harmon G."/>
            <person name="Edwards J."/>
            <person name="Latreille P."/>
            <person name="Courtney L."/>
            <person name="Cloud J."/>
            <person name="Abbott A."/>
            <person name="Scott K."/>
            <person name="Johnson D."/>
            <person name="Minx P."/>
            <person name="Bentley D."/>
            <person name="Fulton B."/>
            <person name="Miller N."/>
            <person name="Greco T."/>
            <person name="Kemp K."/>
            <person name="Kramer J."/>
            <person name="Fulton L."/>
            <person name="Mardis E."/>
            <person name="Dante M."/>
            <person name="Pepin K."/>
            <person name="Hillier L.W."/>
            <person name="Nelson J."/>
            <person name="Spieth J."/>
            <person name="Ryan E."/>
            <person name="Andrews S."/>
            <person name="Geisel C."/>
            <person name="Layman D."/>
            <person name="Du H."/>
            <person name="Ali J."/>
            <person name="Berghoff A."/>
            <person name="Jones K."/>
            <person name="Drone K."/>
            <person name="Cotton M."/>
            <person name="Joshu C."/>
            <person name="Antonoiu B."/>
            <person name="Zidanic M."/>
            <person name="Strong C."/>
            <person name="Sun H."/>
            <person name="Lamar B."/>
            <person name="Yordan C."/>
            <person name="Ma P."/>
            <person name="Zhong J."/>
            <person name="Preston R."/>
            <person name="Vil D."/>
            <person name="Shekher M."/>
            <person name="Matero A."/>
            <person name="Shah R."/>
            <person name="Swaby I.K."/>
            <person name="O'Shaughnessy A."/>
            <person name="Rodriguez M."/>
            <person name="Hoffman J."/>
            <person name="Till S."/>
            <person name="Granat S."/>
            <person name="Shohdy N."/>
            <person name="Hasegawa A."/>
            <person name="Hameed A."/>
            <person name="Lodhi M."/>
            <person name="Johnson A."/>
            <person name="Chen E."/>
            <person name="Marra M.A."/>
            <person name="Martienssen R."/>
            <person name="McCombie W.R."/>
        </authorList>
    </citation>
    <scope>NUCLEOTIDE SEQUENCE [LARGE SCALE GENOMIC DNA]</scope>
    <source>
        <strain>cv. Columbia</strain>
    </source>
</reference>
<reference key="3">
    <citation type="journal article" date="2017" name="Plant J.">
        <title>Araport11: a complete reannotation of the Arabidopsis thaliana reference genome.</title>
        <authorList>
            <person name="Cheng C.Y."/>
            <person name="Krishnakumar V."/>
            <person name="Chan A.P."/>
            <person name="Thibaud-Nissen F."/>
            <person name="Schobel S."/>
            <person name="Town C.D."/>
        </authorList>
    </citation>
    <scope>GENOME REANNOTATION</scope>
    <source>
        <strain>cv. Columbia</strain>
    </source>
</reference>
<reference key="4">
    <citation type="submission" date="2004-12" db="EMBL/GenBank/DDBJ databases">
        <title>Arabidopsis ORF clones.</title>
        <authorList>
            <person name="Cheuk R.F."/>
            <person name="Chen H."/>
            <person name="Kim C.J."/>
            <person name="Shinn P."/>
            <person name="Ecker J.R."/>
        </authorList>
    </citation>
    <scope>NUCLEOTIDE SEQUENCE [LARGE SCALE MRNA]</scope>
    <source>
        <strain>cv. Columbia</strain>
    </source>
</reference>
<reference key="5">
    <citation type="journal article" date="2010" name="Plant Cell">
        <title>The deubiquitinating enzyme AMSH3 is required for intracellular trafficking and vacuole biogenesis in Arabidopsis thaliana.</title>
        <authorList>
            <person name="Isono E."/>
            <person name="Katsiarimpa A."/>
            <person name="Mueller I.K."/>
            <person name="Anzenberger F."/>
            <person name="Stierhof Y.-D."/>
            <person name="Geldner N."/>
            <person name="Chory J."/>
            <person name="Schwechheimer C."/>
        </authorList>
    </citation>
    <scope>FUNCTION</scope>
    <scope>DISRUPTION PHENOTYPE</scope>
    <scope>SUBCELLULAR LOCATION</scope>
    <scope>MUTAGENESIS OF 411-HIS--HIS-413</scope>
    <scope>INTERACTION WITH PATL1; PATL2; HSC70-1; HSC70-3; VHA-A; BGLU23 AND EPSIN1</scope>
    <scope>GENE FAMILY</scope>
    <scope>NOMENCLATURE</scope>
</reference>
<reference key="6">
    <citation type="journal article" date="2015" name="Proc. Natl. Acad. Sci. U.S.A.">
        <title>Arabidopsis ALIX is required for the endosomal localization of the deubiquitinating enzyme AMSH3.</title>
        <authorList>
            <person name="Kalinowska K."/>
            <person name="Nagel M.K."/>
            <person name="Goodman K."/>
            <person name="Cuyas L."/>
            <person name="Anzenberger F."/>
            <person name="Alkofer A."/>
            <person name="Paz-Ares J."/>
            <person name="Braun P."/>
            <person name="Rubio V."/>
            <person name="Otegui M.S."/>
            <person name="Isono E."/>
        </authorList>
    </citation>
    <scope>INTERACTION WITH BRO1</scope>
    <scope>SUBCELLULAR LOCATION</scope>
</reference>